<feature type="signal peptide" evidence="1">
    <location>
        <begin position="1"/>
        <end position="20"/>
    </location>
</feature>
<feature type="chain" id="PRO_1000024387" description="Outer membrane protein assembly factor BamA">
    <location>
        <begin position="21"/>
        <end position="804"/>
    </location>
</feature>
<feature type="domain" description="POTRA 1" evidence="2">
    <location>
        <begin position="24"/>
        <end position="91"/>
    </location>
</feature>
<feature type="domain" description="POTRA 2" evidence="2">
    <location>
        <begin position="92"/>
        <end position="172"/>
    </location>
</feature>
<feature type="domain" description="POTRA 3" evidence="2">
    <location>
        <begin position="175"/>
        <end position="263"/>
    </location>
</feature>
<feature type="domain" description="POTRA 4" evidence="2">
    <location>
        <begin position="266"/>
        <end position="344"/>
    </location>
</feature>
<feature type="domain" description="POTRA 5" evidence="2">
    <location>
        <begin position="347"/>
        <end position="421"/>
    </location>
</feature>
<evidence type="ECO:0000255" key="1">
    <source>
        <dbReference type="HAMAP-Rule" id="MF_01430"/>
    </source>
</evidence>
<evidence type="ECO:0000255" key="2">
    <source>
        <dbReference type="PROSITE-ProRule" id="PRU01115"/>
    </source>
</evidence>
<sequence>MAMKKLLIASLLFSSATVYGADGFVVKDIHFEGLQRVAVGAALLSMPVRVGDTVNDEDISNTIRALFASGNFEDVRVLRDGDTLLVQVKERPTIASITFSGNKSVKDDMLKQNLEASGVRVGESLDRTTLSDIEKGLEDFYYSVGKYSASVKAVVTPLPRNRVDLKLVFQEGVSAKIQQINIVGNRAFSTEELISNFQLRDEVPWWNVVGDRKYQKQKLQGDLETLRSYYLDRGYARFNIDSTQVSLTPDKKGIYVTINVTEGDQYKIAGVEVSGNLAGHSAEIESLTKMQPGELYNGTKVTRMEDDIKKLLGRYGYAYPRVQTQPEINDADKTVKLHVNVDSGNRFYVRKIRFEGNDTSKDAVLRREMRQMEGAWLGSDLVDQGKERLNRLGYFETVDVDTQRVSGSPDQVDVVYKVKERNTGSFNFGVGYGTESGVSFQVGVQQDNWLGTGYSVGINGTKNDYQTYSEFSVTNPYFTVDGVSLGGRIFYNDFKADDADLSSYTNKSYGVDGTLGFPVNEYNTLRLGLGYVHNDLSNMEPQVAMWRYLDSLGQSAKTTSDDNGFSADDFTLNYGWTYNHLDRGFFPTSGSRVNLNGKVTIPGSDNEFYKVTLDTATYVPIDDDHKWVVLGRTRWGYGDGLGGKEMPFYENFYAGGSSTVRGFQSNNIGPKAVYYSGPGLDNCDKAVGGYCSSDDAVGGNAMGVASLEFITPTPFLSEKYANSVRTSLFADAGSVWDTNWKNTAAMRAAGVPDYSDPSNIRMSAGIALQWMSPLGPLVFSYAQPFKKYEGDKAEQFQFNIGKTW</sequence>
<gene>
    <name evidence="1" type="primary">bamA</name>
    <name type="synonym">yaeT</name>
    <name type="ordered locus">ESA_03165</name>
</gene>
<accession>A7MGT7</accession>
<name>BAMA_CROS8</name>
<dbReference type="EMBL" id="CP000783">
    <property type="protein sequence ID" value="ABU78388.1"/>
    <property type="molecule type" value="Genomic_DNA"/>
</dbReference>
<dbReference type="RefSeq" id="WP_004386130.1">
    <property type="nucleotide sequence ID" value="NC_009778.1"/>
</dbReference>
<dbReference type="SMR" id="A7MGT7"/>
<dbReference type="GeneID" id="56731856"/>
<dbReference type="KEGG" id="esa:ESA_03165"/>
<dbReference type="HOGENOM" id="CLU_007664_1_0_6"/>
<dbReference type="Proteomes" id="UP000000260">
    <property type="component" value="Chromosome"/>
</dbReference>
<dbReference type="GO" id="GO:1990063">
    <property type="term" value="C:Bam protein complex"/>
    <property type="evidence" value="ECO:0007669"/>
    <property type="project" value="TreeGrafter"/>
</dbReference>
<dbReference type="GO" id="GO:0043165">
    <property type="term" value="P:Gram-negative-bacterium-type cell outer membrane assembly"/>
    <property type="evidence" value="ECO:0007669"/>
    <property type="project" value="UniProtKB-UniRule"/>
</dbReference>
<dbReference type="GO" id="GO:0051205">
    <property type="term" value="P:protein insertion into membrane"/>
    <property type="evidence" value="ECO:0007669"/>
    <property type="project" value="UniProtKB-UniRule"/>
</dbReference>
<dbReference type="FunFam" id="2.40.160.50:FF:000001">
    <property type="entry name" value="Outer membrane protein assembly factor BamA"/>
    <property type="match status" value="1"/>
</dbReference>
<dbReference type="FunFam" id="3.10.20.310:FF:000001">
    <property type="entry name" value="Outer membrane protein assembly factor BamA"/>
    <property type="match status" value="1"/>
</dbReference>
<dbReference type="FunFam" id="3.10.20.310:FF:000002">
    <property type="entry name" value="Outer membrane protein assembly factor BamA"/>
    <property type="match status" value="1"/>
</dbReference>
<dbReference type="FunFam" id="3.10.20.310:FF:000003">
    <property type="entry name" value="Outer membrane protein assembly factor BamA"/>
    <property type="match status" value="1"/>
</dbReference>
<dbReference type="FunFam" id="3.10.20.310:FF:000004">
    <property type="entry name" value="Outer membrane protein assembly factor BamA"/>
    <property type="match status" value="1"/>
</dbReference>
<dbReference type="FunFam" id="3.10.20.310:FF:000005">
    <property type="entry name" value="Outer membrane protein assembly factor BamA"/>
    <property type="match status" value="1"/>
</dbReference>
<dbReference type="Gene3D" id="3.10.20.310">
    <property type="entry name" value="membrane protein fhac"/>
    <property type="match status" value="5"/>
</dbReference>
<dbReference type="Gene3D" id="2.40.160.50">
    <property type="entry name" value="membrane protein fhac: a member of the omp85/tpsb transporter family"/>
    <property type="match status" value="1"/>
</dbReference>
<dbReference type="HAMAP" id="MF_01430">
    <property type="entry name" value="OM_assembly_BamA"/>
    <property type="match status" value="1"/>
</dbReference>
<dbReference type="InterPro" id="IPR000184">
    <property type="entry name" value="Bac_surfAg_D15"/>
</dbReference>
<dbReference type="InterPro" id="IPR010827">
    <property type="entry name" value="BamA/TamA_POTRA"/>
</dbReference>
<dbReference type="InterPro" id="IPR039910">
    <property type="entry name" value="D15-like"/>
</dbReference>
<dbReference type="InterPro" id="IPR023707">
    <property type="entry name" value="OM_assembly_BamA"/>
</dbReference>
<dbReference type="InterPro" id="IPR034746">
    <property type="entry name" value="POTRA"/>
</dbReference>
<dbReference type="NCBIfam" id="TIGR03303">
    <property type="entry name" value="OM_YaeT"/>
    <property type="match status" value="1"/>
</dbReference>
<dbReference type="NCBIfam" id="NF008287">
    <property type="entry name" value="PRK11067.1"/>
    <property type="match status" value="1"/>
</dbReference>
<dbReference type="PANTHER" id="PTHR12815:SF23">
    <property type="entry name" value="OUTER MEMBRANE PROTEIN ASSEMBLY FACTOR BAMA"/>
    <property type="match status" value="1"/>
</dbReference>
<dbReference type="PANTHER" id="PTHR12815">
    <property type="entry name" value="SORTING AND ASSEMBLY MACHINERY SAMM50 PROTEIN FAMILY MEMBER"/>
    <property type="match status" value="1"/>
</dbReference>
<dbReference type="Pfam" id="PF01103">
    <property type="entry name" value="Omp85"/>
    <property type="match status" value="1"/>
</dbReference>
<dbReference type="Pfam" id="PF07244">
    <property type="entry name" value="POTRA"/>
    <property type="match status" value="4"/>
</dbReference>
<dbReference type="PIRSF" id="PIRSF006076">
    <property type="entry name" value="OM_assembly_OMP85"/>
    <property type="match status" value="1"/>
</dbReference>
<dbReference type="PROSITE" id="PS51779">
    <property type="entry name" value="POTRA"/>
    <property type="match status" value="5"/>
</dbReference>
<proteinExistence type="inferred from homology"/>
<comment type="function">
    <text evidence="1">Part of the outer membrane protein assembly complex, which is involved in assembly and insertion of beta-barrel proteins into the outer membrane. Constitutes, with BamD, the core component of the assembly machinery.</text>
</comment>
<comment type="subunit">
    <text evidence="1">Part of the Bam complex, which is composed of the outer membrane protein BamA, and four lipoproteins BamB, BamC, BamD and BamE.</text>
</comment>
<comment type="subcellular location">
    <subcellularLocation>
        <location evidence="1">Cell outer membrane</location>
    </subcellularLocation>
</comment>
<comment type="similarity">
    <text evidence="1">Belongs to the BamA family.</text>
</comment>
<organism>
    <name type="scientific">Cronobacter sakazakii (strain ATCC BAA-894)</name>
    <name type="common">Enterobacter sakazakii</name>
    <dbReference type="NCBI Taxonomy" id="290339"/>
    <lineage>
        <taxon>Bacteria</taxon>
        <taxon>Pseudomonadati</taxon>
        <taxon>Pseudomonadota</taxon>
        <taxon>Gammaproteobacteria</taxon>
        <taxon>Enterobacterales</taxon>
        <taxon>Enterobacteriaceae</taxon>
        <taxon>Cronobacter</taxon>
    </lineage>
</organism>
<protein>
    <recommendedName>
        <fullName evidence="1">Outer membrane protein assembly factor BamA</fullName>
    </recommendedName>
</protein>
<keyword id="KW-0998">Cell outer membrane</keyword>
<keyword id="KW-0472">Membrane</keyword>
<keyword id="KW-1185">Reference proteome</keyword>
<keyword id="KW-0677">Repeat</keyword>
<keyword id="KW-0732">Signal</keyword>
<keyword id="KW-0812">Transmembrane</keyword>
<keyword id="KW-1134">Transmembrane beta strand</keyword>
<reference key="1">
    <citation type="journal article" date="2010" name="PLoS ONE">
        <title>Genome sequence of Cronobacter sakazakii BAA-894 and comparative genomic hybridization analysis with other Cronobacter species.</title>
        <authorList>
            <person name="Kucerova E."/>
            <person name="Clifton S.W."/>
            <person name="Xia X.Q."/>
            <person name="Long F."/>
            <person name="Porwollik S."/>
            <person name="Fulton L."/>
            <person name="Fronick C."/>
            <person name="Minx P."/>
            <person name="Kyung K."/>
            <person name="Warren W."/>
            <person name="Fulton R."/>
            <person name="Feng D."/>
            <person name="Wollam A."/>
            <person name="Shah N."/>
            <person name="Bhonagiri V."/>
            <person name="Nash W.E."/>
            <person name="Hallsworth-Pepin K."/>
            <person name="Wilson R.K."/>
            <person name="McClelland M."/>
            <person name="Forsythe S.J."/>
        </authorList>
    </citation>
    <scope>NUCLEOTIDE SEQUENCE [LARGE SCALE GENOMIC DNA]</scope>
    <source>
        <strain>ATCC BAA-894</strain>
    </source>
</reference>